<name>OBG_CHRSD</name>
<keyword id="KW-0963">Cytoplasm</keyword>
<keyword id="KW-0342">GTP-binding</keyword>
<keyword id="KW-0378">Hydrolase</keyword>
<keyword id="KW-0460">Magnesium</keyword>
<keyword id="KW-0479">Metal-binding</keyword>
<keyword id="KW-0547">Nucleotide-binding</keyword>
<keyword id="KW-1185">Reference proteome</keyword>
<dbReference type="EC" id="3.6.5.-" evidence="1"/>
<dbReference type="EMBL" id="CP000285">
    <property type="protein sequence ID" value="ABE57838.1"/>
    <property type="molecule type" value="Genomic_DNA"/>
</dbReference>
<dbReference type="RefSeq" id="WP_011505784.1">
    <property type="nucleotide sequence ID" value="NC_007963.1"/>
</dbReference>
<dbReference type="SMR" id="Q1R0C0"/>
<dbReference type="STRING" id="290398.Csal_0476"/>
<dbReference type="GeneID" id="95333229"/>
<dbReference type="KEGG" id="csa:Csal_0476"/>
<dbReference type="eggNOG" id="COG0536">
    <property type="taxonomic scope" value="Bacteria"/>
</dbReference>
<dbReference type="HOGENOM" id="CLU_011747_2_0_6"/>
<dbReference type="OrthoDB" id="9807318at2"/>
<dbReference type="Proteomes" id="UP000000239">
    <property type="component" value="Chromosome"/>
</dbReference>
<dbReference type="GO" id="GO:0005737">
    <property type="term" value="C:cytoplasm"/>
    <property type="evidence" value="ECO:0007669"/>
    <property type="project" value="UniProtKB-SubCell"/>
</dbReference>
<dbReference type="GO" id="GO:0005525">
    <property type="term" value="F:GTP binding"/>
    <property type="evidence" value="ECO:0007669"/>
    <property type="project" value="UniProtKB-UniRule"/>
</dbReference>
<dbReference type="GO" id="GO:0003924">
    <property type="term" value="F:GTPase activity"/>
    <property type="evidence" value="ECO:0007669"/>
    <property type="project" value="UniProtKB-UniRule"/>
</dbReference>
<dbReference type="GO" id="GO:0000287">
    <property type="term" value="F:magnesium ion binding"/>
    <property type="evidence" value="ECO:0007669"/>
    <property type="project" value="InterPro"/>
</dbReference>
<dbReference type="GO" id="GO:0042254">
    <property type="term" value="P:ribosome biogenesis"/>
    <property type="evidence" value="ECO:0007669"/>
    <property type="project" value="UniProtKB-UniRule"/>
</dbReference>
<dbReference type="CDD" id="cd01898">
    <property type="entry name" value="Obg"/>
    <property type="match status" value="1"/>
</dbReference>
<dbReference type="FunFam" id="2.70.210.12:FF:000001">
    <property type="entry name" value="GTPase Obg"/>
    <property type="match status" value="1"/>
</dbReference>
<dbReference type="Gene3D" id="2.70.210.12">
    <property type="entry name" value="GTP1/OBG domain"/>
    <property type="match status" value="1"/>
</dbReference>
<dbReference type="Gene3D" id="3.40.50.300">
    <property type="entry name" value="P-loop containing nucleotide triphosphate hydrolases"/>
    <property type="match status" value="1"/>
</dbReference>
<dbReference type="HAMAP" id="MF_01454">
    <property type="entry name" value="GTPase_Obg"/>
    <property type="match status" value="1"/>
</dbReference>
<dbReference type="InterPro" id="IPR031167">
    <property type="entry name" value="G_OBG"/>
</dbReference>
<dbReference type="InterPro" id="IPR006073">
    <property type="entry name" value="GTP-bd"/>
</dbReference>
<dbReference type="InterPro" id="IPR014100">
    <property type="entry name" value="GTP-bd_Obg/CgtA"/>
</dbReference>
<dbReference type="InterPro" id="IPR006074">
    <property type="entry name" value="GTP1-OBG_CS"/>
</dbReference>
<dbReference type="InterPro" id="IPR006169">
    <property type="entry name" value="GTP1_OBG_dom"/>
</dbReference>
<dbReference type="InterPro" id="IPR036726">
    <property type="entry name" value="GTP1_OBG_dom_sf"/>
</dbReference>
<dbReference type="InterPro" id="IPR045086">
    <property type="entry name" value="OBG_GTPase"/>
</dbReference>
<dbReference type="InterPro" id="IPR027417">
    <property type="entry name" value="P-loop_NTPase"/>
</dbReference>
<dbReference type="NCBIfam" id="TIGR02729">
    <property type="entry name" value="Obg_CgtA"/>
    <property type="match status" value="1"/>
</dbReference>
<dbReference type="NCBIfam" id="NF008955">
    <property type="entry name" value="PRK12297.1"/>
    <property type="match status" value="1"/>
</dbReference>
<dbReference type="NCBIfam" id="NF008956">
    <property type="entry name" value="PRK12299.1"/>
    <property type="match status" value="1"/>
</dbReference>
<dbReference type="PANTHER" id="PTHR11702">
    <property type="entry name" value="DEVELOPMENTALLY REGULATED GTP-BINDING PROTEIN-RELATED"/>
    <property type="match status" value="1"/>
</dbReference>
<dbReference type="PANTHER" id="PTHR11702:SF31">
    <property type="entry name" value="MITOCHONDRIAL RIBOSOME-ASSOCIATED GTPASE 2"/>
    <property type="match status" value="1"/>
</dbReference>
<dbReference type="Pfam" id="PF01018">
    <property type="entry name" value="GTP1_OBG"/>
    <property type="match status" value="1"/>
</dbReference>
<dbReference type="Pfam" id="PF01926">
    <property type="entry name" value="MMR_HSR1"/>
    <property type="match status" value="1"/>
</dbReference>
<dbReference type="PIRSF" id="PIRSF002401">
    <property type="entry name" value="GTP_bd_Obg/CgtA"/>
    <property type="match status" value="1"/>
</dbReference>
<dbReference type="PRINTS" id="PR00326">
    <property type="entry name" value="GTP1OBG"/>
</dbReference>
<dbReference type="SUPFAM" id="SSF82051">
    <property type="entry name" value="Obg GTP-binding protein N-terminal domain"/>
    <property type="match status" value="1"/>
</dbReference>
<dbReference type="SUPFAM" id="SSF52540">
    <property type="entry name" value="P-loop containing nucleoside triphosphate hydrolases"/>
    <property type="match status" value="1"/>
</dbReference>
<dbReference type="PROSITE" id="PS51710">
    <property type="entry name" value="G_OBG"/>
    <property type="match status" value="1"/>
</dbReference>
<dbReference type="PROSITE" id="PS00905">
    <property type="entry name" value="GTP1_OBG"/>
    <property type="match status" value="1"/>
</dbReference>
<dbReference type="PROSITE" id="PS51883">
    <property type="entry name" value="OBG"/>
    <property type="match status" value="1"/>
</dbReference>
<accession>Q1R0C0</accession>
<evidence type="ECO:0000255" key="1">
    <source>
        <dbReference type="HAMAP-Rule" id="MF_01454"/>
    </source>
</evidence>
<evidence type="ECO:0000255" key="2">
    <source>
        <dbReference type="PROSITE-ProRule" id="PRU01231"/>
    </source>
</evidence>
<evidence type="ECO:0000256" key="3">
    <source>
        <dbReference type="SAM" id="MobiDB-lite"/>
    </source>
</evidence>
<reference key="1">
    <citation type="journal article" date="2011" name="Stand. Genomic Sci.">
        <title>Complete genome sequence of the halophilic and highly halotolerant Chromohalobacter salexigens type strain (1H11(T)).</title>
        <authorList>
            <person name="Copeland A."/>
            <person name="O'Connor K."/>
            <person name="Lucas S."/>
            <person name="Lapidus A."/>
            <person name="Berry K.W."/>
            <person name="Detter J.C."/>
            <person name="Del Rio T.G."/>
            <person name="Hammon N."/>
            <person name="Dalin E."/>
            <person name="Tice H."/>
            <person name="Pitluck S."/>
            <person name="Bruce D."/>
            <person name="Goodwin L."/>
            <person name="Han C."/>
            <person name="Tapia R."/>
            <person name="Saunders E."/>
            <person name="Schmutz J."/>
            <person name="Brettin T."/>
            <person name="Larimer F."/>
            <person name="Land M."/>
            <person name="Hauser L."/>
            <person name="Vargas C."/>
            <person name="Nieto J.J."/>
            <person name="Kyrpides N.C."/>
            <person name="Ivanova N."/>
            <person name="Goker M."/>
            <person name="Klenk H.P."/>
            <person name="Csonka L.N."/>
            <person name="Woyke T."/>
        </authorList>
    </citation>
    <scope>NUCLEOTIDE SEQUENCE [LARGE SCALE GENOMIC DNA]</scope>
    <source>
        <strain>ATCC BAA-138 / DSM 3043 / CIP 106854 / NCIMB 13768 / 1H11</strain>
    </source>
</reference>
<sequence>MQFVDEASIIVEAGKGGNGCLSFRREKYVPKGGPDGGDGGHGGSVYLIGDESLNTLIDFKYQRFYKAPNGQPGQGRQMSGRNGEDLHVKVPVGTTVIDEDTLEVIADVTEAGQVVLVAQAGRRGLGNIHFKSSTNRAPRKTTPGTEGERRNLRFEMKVMADVGLLGVPNAGKSTLIRAVSAAKPKVANYPFTTLVPNLGVVKLGTHEHFVMADVPGLIEGASDGAGLGLRFLKHLTRTRLLLHVVDVAPFDESDPVDSARAIAHELEQFSATLAERPRWLVLNKLDLLPEEERPSTVDDIVERLAWSGPVYKISAISGDGTQALVQAAHRWLTEQRQLEAEDETAFEHEREMRRRMEDEAVARAEARMSRKRKPAEDDDDDFDEDDYDVEVEYAP</sequence>
<organism>
    <name type="scientific">Chromohalobacter salexigens (strain ATCC BAA-138 / DSM 3043 / CIP 106854 / NCIMB 13768 / 1H11)</name>
    <dbReference type="NCBI Taxonomy" id="290398"/>
    <lineage>
        <taxon>Bacteria</taxon>
        <taxon>Pseudomonadati</taxon>
        <taxon>Pseudomonadota</taxon>
        <taxon>Gammaproteobacteria</taxon>
        <taxon>Oceanospirillales</taxon>
        <taxon>Halomonadaceae</taxon>
        <taxon>Chromohalobacter</taxon>
    </lineage>
</organism>
<comment type="function">
    <text evidence="1">An essential GTPase which binds GTP, GDP and possibly (p)ppGpp with moderate affinity, with high nucleotide exchange rates and a fairly low GTP hydrolysis rate. Plays a role in control of the cell cycle, stress response, ribosome biogenesis and in those bacteria that undergo differentiation, in morphogenesis control.</text>
</comment>
<comment type="cofactor">
    <cofactor evidence="1">
        <name>Mg(2+)</name>
        <dbReference type="ChEBI" id="CHEBI:18420"/>
    </cofactor>
</comment>
<comment type="subunit">
    <text evidence="1">Monomer.</text>
</comment>
<comment type="subcellular location">
    <subcellularLocation>
        <location evidence="1">Cytoplasm</location>
    </subcellularLocation>
</comment>
<comment type="similarity">
    <text evidence="1">Belongs to the TRAFAC class OBG-HflX-like GTPase superfamily. OBG GTPase family.</text>
</comment>
<feature type="chain" id="PRO_0000385833" description="GTPase Obg">
    <location>
        <begin position="1"/>
        <end position="395"/>
    </location>
</feature>
<feature type="domain" description="Obg" evidence="2">
    <location>
        <begin position="1"/>
        <end position="159"/>
    </location>
</feature>
<feature type="domain" description="OBG-type G" evidence="1">
    <location>
        <begin position="160"/>
        <end position="333"/>
    </location>
</feature>
<feature type="region of interest" description="Disordered" evidence="3">
    <location>
        <begin position="128"/>
        <end position="147"/>
    </location>
</feature>
<feature type="region of interest" description="Disordered" evidence="3">
    <location>
        <begin position="340"/>
        <end position="395"/>
    </location>
</feature>
<feature type="compositionally biased region" description="Basic and acidic residues" evidence="3">
    <location>
        <begin position="340"/>
        <end position="368"/>
    </location>
</feature>
<feature type="compositionally biased region" description="Acidic residues" evidence="3">
    <location>
        <begin position="376"/>
        <end position="395"/>
    </location>
</feature>
<feature type="binding site" evidence="1">
    <location>
        <begin position="166"/>
        <end position="173"/>
    </location>
    <ligand>
        <name>GTP</name>
        <dbReference type="ChEBI" id="CHEBI:37565"/>
    </ligand>
</feature>
<feature type="binding site" evidence="1">
    <location>
        <position position="173"/>
    </location>
    <ligand>
        <name>Mg(2+)</name>
        <dbReference type="ChEBI" id="CHEBI:18420"/>
    </ligand>
</feature>
<feature type="binding site" evidence="1">
    <location>
        <begin position="191"/>
        <end position="195"/>
    </location>
    <ligand>
        <name>GTP</name>
        <dbReference type="ChEBI" id="CHEBI:37565"/>
    </ligand>
</feature>
<feature type="binding site" evidence="1">
    <location>
        <position position="193"/>
    </location>
    <ligand>
        <name>Mg(2+)</name>
        <dbReference type="ChEBI" id="CHEBI:18420"/>
    </ligand>
</feature>
<feature type="binding site" evidence="1">
    <location>
        <begin position="213"/>
        <end position="216"/>
    </location>
    <ligand>
        <name>GTP</name>
        <dbReference type="ChEBI" id="CHEBI:37565"/>
    </ligand>
</feature>
<feature type="binding site" evidence="1">
    <location>
        <begin position="283"/>
        <end position="286"/>
    </location>
    <ligand>
        <name>GTP</name>
        <dbReference type="ChEBI" id="CHEBI:37565"/>
    </ligand>
</feature>
<feature type="binding site" evidence="1">
    <location>
        <begin position="314"/>
        <end position="316"/>
    </location>
    <ligand>
        <name>GTP</name>
        <dbReference type="ChEBI" id="CHEBI:37565"/>
    </ligand>
</feature>
<gene>
    <name evidence="1" type="primary">obg</name>
    <name type="ordered locus">Csal_0476</name>
</gene>
<protein>
    <recommendedName>
        <fullName evidence="1">GTPase Obg</fullName>
        <ecNumber evidence="1">3.6.5.-</ecNumber>
    </recommendedName>
    <alternativeName>
        <fullName evidence="1">GTP-binding protein Obg</fullName>
    </alternativeName>
</protein>
<proteinExistence type="inferred from homology"/>